<feature type="chain" id="PRO_0000132457" description="Small ribosomal subunit protein uS4">
    <location>
        <begin position="1"/>
        <end position="200"/>
    </location>
</feature>
<feature type="domain" description="S4 RNA-binding" evidence="1">
    <location>
        <begin position="92"/>
        <end position="155"/>
    </location>
</feature>
<accession>P66562</accession>
<accession>Q99TE4</accession>
<organism>
    <name type="scientific">Staphylococcus aureus (strain Mu50 / ATCC 700699)</name>
    <dbReference type="NCBI Taxonomy" id="158878"/>
    <lineage>
        <taxon>Bacteria</taxon>
        <taxon>Bacillati</taxon>
        <taxon>Bacillota</taxon>
        <taxon>Bacilli</taxon>
        <taxon>Bacillales</taxon>
        <taxon>Staphylococcaceae</taxon>
        <taxon>Staphylococcus</taxon>
    </lineage>
</organism>
<reference key="1">
    <citation type="journal article" date="2001" name="Lancet">
        <title>Whole genome sequencing of meticillin-resistant Staphylococcus aureus.</title>
        <authorList>
            <person name="Kuroda M."/>
            <person name="Ohta T."/>
            <person name="Uchiyama I."/>
            <person name="Baba T."/>
            <person name="Yuzawa H."/>
            <person name="Kobayashi I."/>
            <person name="Cui L."/>
            <person name="Oguchi A."/>
            <person name="Aoki K."/>
            <person name="Nagai Y."/>
            <person name="Lian J.-Q."/>
            <person name="Ito T."/>
            <person name="Kanamori M."/>
            <person name="Matsumaru H."/>
            <person name="Maruyama A."/>
            <person name="Murakami H."/>
            <person name="Hosoyama A."/>
            <person name="Mizutani-Ui Y."/>
            <person name="Takahashi N.K."/>
            <person name="Sawano T."/>
            <person name="Inoue R."/>
            <person name="Kaito C."/>
            <person name="Sekimizu K."/>
            <person name="Hirakawa H."/>
            <person name="Kuhara S."/>
            <person name="Goto S."/>
            <person name="Yabuzaki J."/>
            <person name="Kanehisa M."/>
            <person name="Yamashita A."/>
            <person name="Oshima K."/>
            <person name="Furuya K."/>
            <person name="Yoshino C."/>
            <person name="Shiba T."/>
            <person name="Hattori M."/>
            <person name="Ogasawara N."/>
            <person name="Hayashi H."/>
            <person name="Hiramatsu K."/>
        </authorList>
    </citation>
    <scope>NUCLEOTIDE SEQUENCE [LARGE SCALE GENOMIC DNA]</scope>
    <source>
        <strain>Mu50 / ATCC 700699</strain>
    </source>
</reference>
<sequence>MARFRGSNWKKSRRLGISLSGTGKELEKRPYAPGQHGPNQRKKLSEYGLQLREKQKLRYLYGMTERQFRNTFDIAGKKFGVHGENFMILLASRLDAVVYSLGLARTRRQARQLVNHGHILVDGKRVDIPSYSVKPGQTISVREKSQKLNIIVESVEINNFVPEYLNFDADSLTGTFVRLPERSELPAEINEQLIVEYYSR</sequence>
<proteinExistence type="inferred from homology"/>
<comment type="function">
    <text evidence="1">One of the primary rRNA binding proteins, it binds directly to 16S rRNA where it nucleates assembly of the body of the 30S subunit.</text>
</comment>
<comment type="function">
    <text evidence="1">With S5 and S12 plays an important role in translational accuracy.</text>
</comment>
<comment type="subunit">
    <text evidence="1">Part of the 30S ribosomal subunit. Contacts protein S5. The interaction surface between S4 and S5 is involved in control of translational fidelity.</text>
</comment>
<comment type="similarity">
    <text evidence="1">Belongs to the universal ribosomal protein uS4 family.</text>
</comment>
<gene>
    <name evidence="1" type="primary">rpsD</name>
    <name type="ordered locus">SAV1719</name>
</gene>
<keyword id="KW-0687">Ribonucleoprotein</keyword>
<keyword id="KW-0689">Ribosomal protein</keyword>
<keyword id="KW-0694">RNA-binding</keyword>
<keyword id="KW-0699">rRNA-binding</keyword>
<evidence type="ECO:0000255" key="1">
    <source>
        <dbReference type="HAMAP-Rule" id="MF_01306"/>
    </source>
</evidence>
<evidence type="ECO:0000305" key="2"/>
<protein>
    <recommendedName>
        <fullName evidence="1">Small ribosomal subunit protein uS4</fullName>
    </recommendedName>
    <alternativeName>
        <fullName evidence="2">30S ribosomal protein S4</fullName>
    </alternativeName>
</protein>
<dbReference type="EMBL" id="BA000017">
    <property type="protein sequence ID" value="BAB57881.1"/>
    <property type="molecule type" value="Genomic_DNA"/>
</dbReference>
<dbReference type="RefSeq" id="WP_000090512.1">
    <property type="nucleotide sequence ID" value="NC_002758.2"/>
</dbReference>
<dbReference type="SMR" id="P66562"/>
<dbReference type="KEGG" id="sav:SAV1719"/>
<dbReference type="HOGENOM" id="CLU_092403_0_1_9"/>
<dbReference type="PhylomeDB" id="P66562"/>
<dbReference type="Proteomes" id="UP000002481">
    <property type="component" value="Chromosome"/>
</dbReference>
<dbReference type="GO" id="GO:0015935">
    <property type="term" value="C:small ribosomal subunit"/>
    <property type="evidence" value="ECO:0007669"/>
    <property type="project" value="InterPro"/>
</dbReference>
<dbReference type="GO" id="GO:0019843">
    <property type="term" value="F:rRNA binding"/>
    <property type="evidence" value="ECO:0007669"/>
    <property type="project" value="UniProtKB-UniRule"/>
</dbReference>
<dbReference type="GO" id="GO:0003735">
    <property type="term" value="F:structural constituent of ribosome"/>
    <property type="evidence" value="ECO:0007669"/>
    <property type="project" value="InterPro"/>
</dbReference>
<dbReference type="GO" id="GO:0042274">
    <property type="term" value="P:ribosomal small subunit biogenesis"/>
    <property type="evidence" value="ECO:0007669"/>
    <property type="project" value="TreeGrafter"/>
</dbReference>
<dbReference type="GO" id="GO:0006412">
    <property type="term" value="P:translation"/>
    <property type="evidence" value="ECO:0007669"/>
    <property type="project" value="UniProtKB-UniRule"/>
</dbReference>
<dbReference type="CDD" id="cd00165">
    <property type="entry name" value="S4"/>
    <property type="match status" value="1"/>
</dbReference>
<dbReference type="FunFam" id="1.10.1050.10:FF:000001">
    <property type="entry name" value="30S ribosomal protein S4"/>
    <property type="match status" value="1"/>
</dbReference>
<dbReference type="FunFam" id="3.10.290.10:FF:000001">
    <property type="entry name" value="30S ribosomal protein S4"/>
    <property type="match status" value="1"/>
</dbReference>
<dbReference type="Gene3D" id="1.10.1050.10">
    <property type="entry name" value="Ribosomal Protein S4 Delta 41, Chain A, domain 1"/>
    <property type="match status" value="1"/>
</dbReference>
<dbReference type="Gene3D" id="3.10.290.10">
    <property type="entry name" value="RNA-binding S4 domain"/>
    <property type="match status" value="1"/>
</dbReference>
<dbReference type="HAMAP" id="MF_01306_B">
    <property type="entry name" value="Ribosomal_uS4_B"/>
    <property type="match status" value="1"/>
</dbReference>
<dbReference type="InterPro" id="IPR022801">
    <property type="entry name" value="Ribosomal_uS4"/>
</dbReference>
<dbReference type="InterPro" id="IPR005709">
    <property type="entry name" value="Ribosomal_uS4_bac-type"/>
</dbReference>
<dbReference type="InterPro" id="IPR018079">
    <property type="entry name" value="Ribosomal_uS4_CS"/>
</dbReference>
<dbReference type="InterPro" id="IPR001912">
    <property type="entry name" value="Ribosomal_uS4_N"/>
</dbReference>
<dbReference type="InterPro" id="IPR002942">
    <property type="entry name" value="S4_RNA-bd"/>
</dbReference>
<dbReference type="InterPro" id="IPR036986">
    <property type="entry name" value="S4_RNA-bd_sf"/>
</dbReference>
<dbReference type="NCBIfam" id="NF003717">
    <property type="entry name" value="PRK05327.1"/>
    <property type="match status" value="1"/>
</dbReference>
<dbReference type="NCBIfam" id="TIGR01017">
    <property type="entry name" value="rpsD_bact"/>
    <property type="match status" value="1"/>
</dbReference>
<dbReference type="PANTHER" id="PTHR11831">
    <property type="entry name" value="30S 40S RIBOSOMAL PROTEIN"/>
    <property type="match status" value="1"/>
</dbReference>
<dbReference type="PANTHER" id="PTHR11831:SF4">
    <property type="entry name" value="SMALL RIBOSOMAL SUBUNIT PROTEIN US4M"/>
    <property type="match status" value="1"/>
</dbReference>
<dbReference type="Pfam" id="PF00163">
    <property type="entry name" value="Ribosomal_S4"/>
    <property type="match status" value="1"/>
</dbReference>
<dbReference type="Pfam" id="PF01479">
    <property type="entry name" value="S4"/>
    <property type="match status" value="1"/>
</dbReference>
<dbReference type="SMART" id="SM01390">
    <property type="entry name" value="Ribosomal_S4"/>
    <property type="match status" value="1"/>
</dbReference>
<dbReference type="SMART" id="SM00363">
    <property type="entry name" value="S4"/>
    <property type="match status" value="1"/>
</dbReference>
<dbReference type="SUPFAM" id="SSF55174">
    <property type="entry name" value="Alpha-L RNA-binding motif"/>
    <property type="match status" value="1"/>
</dbReference>
<dbReference type="PROSITE" id="PS00632">
    <property type="entry name" value="RIBOSOMAL_S4"/>
    <property type="match status" value="1"/>
</dbReference>
<dbReference type="PROSITE" id="PS50889">
    <property type="entry name" value="S4"/>
    <property type="match status" value="1"/>
</dbReference>
<name>RS4_STAAM</name>